<sequence length="425" mass="47815">MAKQIQAIRGMNDCLPEQSPVWQKVEQILRQVVASYGYSEVRMPIVEQTHLFKRAIGEVTDVVEKEMYTFEDRNGDSLSLRPEGTASCVRAGIEHGLLYNQERRMWYMGPMFRHERPQKGRYRQFHQFGVELFGINGPDIDAELIMLTHRLWRLFGISEHVTLQLNTLGQSSERAAYRDALVAYLEQYKDQLDEESQRRMYSNPLRVLDSKDEKVQAILVGAPRLFDHLGEESLAHFEGLKRLLESAGIQYEVNERLVRGLDYYNLTVFEWVTNSLGAQGTVCAGGRYDGLVEQLGGQPTPAVGFAMGMERLVLMLETLELNGDIRPAVDVYLAMVGEGTEQAGFQLAERLRDALPDLRLMSHCGGGNFKKQLKRADKSGAAIALILGETEVQNGEITIKYLRGQAEQQTVTVDAAIALLAAKGE</sequence>
<evidence type="ECO:0000255" key="1">
    <source>
        <dbReference type="HAMAP-Rule" id="MF_00127"/>
    </source>
</evidence>
<feature type="chain" id="PRO_1000016305" description="Histidine--tRNA ligase">
    <location>
        <begin position="1"/>
        <end position="425"/>
    </location>
</feature>
<reference key="1">
    <citation type="journal article" date="2006" name="J. Bacteriol.">
        <title>Genome sequence of Aeromonas hydrophila ATCC 7966T: jack of all trades.</title>
        <authorList>
            <person name="Seshadri R."/>
            <person name="Joseph S.W."/>
            <person name="Chopra A.K."/>
            <person name="Sha J."/>
            <person name="Shaw J."/>
            <person name="Graf J."/>
            <person name="Haft D.H."/>
            <person name="Wu M."/>
            <person name="Ren Q."/>
            <person name="Rosovitz M.J."/>
            <person name="Madupu R."/>
            <person name="Tallon L."/>
            <person name="Kim M."/>
            <person name="Jin S."/>
            <person name="Vuong H."/>
            <person name="Stine O.C."/>
            <person name="Ali A."/>
            <person name="Horneman A.J."/>
            <person name="Heidelberg J.F."/>
        </authorList>
    </citation>
    <scope>NUCLEOTIDE SEQUENCE [LARGE SCALE GENOMIC DNA]</scope>
    <source>
        <strain>ATCC 7966 / DSM 30187 / BCRC 13018 / CCUG 14551 / JCM 1027 / KCTC 2358 / NCIMB 9240 / NCTC 8049</strain>
    </source>
</reference>
<keyword id="KW-0030">Aminoacyl-tRNA synthetase</keyword>
<keyword id="KW-0067">ATP-binding</keyword>
<keyword id="KW-0963">Cytoplasm</keyword>
<keyword id="KW-0436">Ligase</keyword>
<keyword id="KW-0547">Nucleotide-binding</keyword>
<keyword id="KW-0648">Protein biosynthesis</keyword>
<keyword id="KW-1185">Reference proteome</keyword>
<protein>
    <recommendedName>
        <fullName evidence="1">Histidine--tRNA ligase</fullName>
        <ecNumber evidence="1">6.1.1.21</ecNumber>
    </recommendedName>
    <alternativeName>
        <fullName evidence="1">Histidyl-tRNA synthetase</fullName>
        <shortName evidence="1">HisRS</shortName>
    </alternativeName>
</protein>
<comment type="catalytic activity">
    <reaction evidence="1">
        <text>tRNA(His) + L-histidine + ATP = L-histidyl-tRNA(His) + AMP + diphosphate + H(+)</text>
        <dbReference type="Rhea" id="RHEA:17313"/>
        <dbReference type="Rhea" id="RHEA-COMP:9665"/>
        <dbReference type="Rhea" id="RHEA-COMP:9689"/>
        <dbReference type="ChEBI" id="CHEBI:15378"/>
        <dbReference type="ChEBI" id="CHEBI:30616"/>
        <dbReference type="ChEBI" id="CHEBI:33019"/>
        <dbReference type="ChEBI" id="CHEBI:57595"/>
        <dbReference type="ChEBI" id="CHEBI:78442"/>
        <dbReference type="ChEBI" id="CHEBI:78527"/>
        <dbReference type="ChEBI" id="CHEBI:456215"/>
        <dbReference type="EC" id="6.1.1.21"/>
    </reaction>
</comment>
<comment type="subunit">
    <text evidence="1">Homodimer.</text>
</comment>
<comment type="subcellular location">
    <subcellularLocation>
        <location evidence="1">Cytoplasm</location>
    </subcellularLocation>
</comment>
<comment type="similarity">
    <text evidence="1">Belongs to the class-II aminoacyl-tRNA synthetase family.</text>
</comment>
<organism>
    <name type="scientific">Aeromonas hydrophila subsp. hydrophila (strain ATCC 7966 / DSM 30187 / BCRC 13018 / CCUG 14551 / JCM 1027 / KCTC 2358 / NCIMB 9240 / NCTC 8049)</name>
    <dbReference type="NCBI Taxonomy" id="380703"/>
    <lineage>
        <taxon>Bacteria</taxon>
        <taxon>Pseudomonadati</taxon>
        <taxon>Pseudomonadota</taxon>
        <taxon>Gammaproteobacteria</taxon>
        <taxon>Aeromonadales</taxon>
        <taxon>Aeromonadaceae</taxon>
        <taxon>Aeromonas</taxon>
    </lineage>
</organism>
<dbReference type="EC" id="6.1.1.21" evidence="1"/>
<dbReference type="EMBL" id="CP000462">
    <property type="protein sequence ID" value="ABK37039.1"/>
    <property type="molecule type" value="Genomic_DNA"/>
</dbReference>
<dbReference type="RefSeq" id="WP_011705646.1">
    <property type="nucleotide sequence ID" value="NC_008570.1"/>
</dbReference>
<dbReference type="RefSeq" id="YP_856296.1">
    <property type="nucleotide sequence ID" value="NC_008570.1"/>
</dbReference>
<dbReference type="SMR" id="A0KJ45"/>
<dbReference type="STRING" id="380703.AHA_1760"/>
<dbReference type="EnsemblBacteria" id="ABK37039">
    <property type="protein sequence ID" value="ABK37039"/>
    <property type="gene ID" value="AHA_1760"/>
</dbReference>
<dbReference type="GeneID" id="4490290"/>
<dbReference type="KEGG" id="aha:AHA_1760"/>
<dbReference type="PATRIC" id="fig|380703.7.peg.1776"/>
<dbReference type="eggNOG" id="COG0124">
    <property type="taxonomic scope" value="Bacteria"/>
</dbReference>
<dbReference type="HOGENOM" id="CLU_025113_1_1_6"/>
<dbReference type="OrthoDB" id="9800814at2"/>
<dbReference type="Proteomes" id="UP000000756">
    <property type="component" value="Chromosome"/>
</dbReference>
<dbReference type="GO" id="GO:0005737">
    <property type="term" value="C:cytoplasm"/>
    <property type="evidence" value="ECO:0007669"/>
    <property type="project" value="UniProtKB-SubCell"/>
</dbReference>
<dbReference type="GO" id="GO:0005524">
    <property type="term" value="F:ATP binding"/>
    <property type="evidence" value="ECO:0007669"/>
    <property type="project" value="UniProtKB-UniRule"/>
</dbReference>
<dbReference type="GO" id="GO:0004821">
    <property type="term" value="F:histidine-tRNA ligase activity"/>
    <property type="evidence" value="ECO:0007669"/>
    <property type="project" value="UniProtKB-UniRule"/>
</dbReference>
<dbReference type="GO" id="GO:0006427">
    <property type="term" value="P:histidyl-tRNA aminoacylation"/>
    <property type="evidence" value="ECO:0007669"/>
    <property type="project" value="UniProtKB-UniRule"/>
</dbReference>
<dbReference type="CDD" id="cd00773">
    <property type="entry name" value="HisRS-like_core"/>
    <property type="match status" value="1"/>
</dbReference>
<dbReference type="CDD" id="cd00859">
    <property type="entry name" value="HisRS_anticodon"/>
    <property type="match status" value="1"/>
</dbReference>
<dbReference type="FunFam" id="3.30.930.10:FF:000005">
    <property type="entry name" value="Histidine--tRNA ligase"/>
    <property type="match status" value="1"/>
</dbReference>
<dbReference type="Gene3D" id="3.40.50.800">
    <property type="entry name" value="Anticodon-binding domain"/>
    <property type="match status" value="1"/>
</dbReference>
<dbReference type="Gene3D" id="3.30.930.10">
    <property type="entry name" value="Bira Bifunctional Protein, Domain 2"/>
    <property type="match status" value="1"/>
</dbReference>
<dbReference type="HAMAP" id="MF_00127">
    <property type="entry name" value="His_tRNA_synth"/>
    <property type="match status" value="1"/>
</dbReference>
<dbReference type="InterPro" id="IPR006195">
    <property type="entry name" value="aa-tRNA-synth_II"/>
</dbReference>
<dbReference type="InterPro" id="IPR045864">
    <property type="entry name" value="aa-tRNA-synth_II/BPL/LPL"/>
</dbReference>
<dbReference type="InterPro" id="IPR004154">
    <property type="entry name" value="Anticodon-bd"/>
</dbReference>
<dbReference type="InterPro" id="IPR036621">
    <property type="entry name" value="Anticodon-bd_dom_sf"/>
</dbReference>
<dbReference type="InterPro" id="IPR015807">
    <property type="entry name" value="His-tRNA-ligase"/>
</dbReference>
<dbReference type="InterPro" id="IPR041715">
    <property type="entry name" value="HisRS-like_core"/>
</dbReference>
<dbReference type="InterPro" id="IPR004516">
    <property type="entry name" value="HisRS/HisZ"/>
</dbReference>
<dbReference type="InterPro" id="IPR033656">
    <property type="entry name" value="HisRS_anticodon"/>
</dbReference>
<dbReference type="NCBIfam" id="TIGR00442">
    <property type="entry name" value="hisS"/>
    <property type="match status" value="1"/>
</dbReference>
<dbReference type="PANTHER" id="PTHR43707:SF1">
    <property type="entry name" value="HISTIDINE--TRNA LIGASE, MITOCHONDRIAL-RELATED"/>
    <property type="match status" value="1"/>
</dbReference>
<dbReference type="PANTHER" id="PTHR43707">
    <property type="entry name" value="HISTIDYL-TRNA SYNTHETASE"/>
    <property type="match status" value="1"/>
</dbReference>
<dbReference type="Pfam" id="PF03129">
    <property type="entry name" value="HGTP_anticodon"/>
    <property type="match status" value="1"/>
</dbReference>
<dbReference type="Pfam" id="PF13393">
    <property type="entry name" value="tRNA-synt_His"/>
    <property type="match status" value="1"/>
</dbReference>
<dbReference type="PIRSF" id="PIRSF001549">
    <property type="entry name" value="His-tRNA_synth"/>
    <property type="match status" value="1"/>
</dbReference>
<dbReference type="SUPFAM" id="SSF52954">
    <property type="entry name" value="Class II aaRS ABD-related"/>
    <property type="match status" value="1"/>
</dbReference>
<dbReference type="SUPFAM" id="SSF55681">
    <property type="entry name" value="Class II aaRS and biotin synthetases"/>
    <property type="match status" value="1"/>
</dbReference>
<dbReference type="PROSITE" id="PS50862">
    <property type="entry name" value="AA_TRNA_LIGASE_II"/>
    <property type="match status" value="1"/>
</dbReference>
<proteinExistence type="inferred from homology"/>
<accession>A0KJ45</accession>
<name>SYH_AERHH</name>
<gene>
    <name evidence="1" type="primary">hisS</name>
    <name type="ordered locus">AHA_1760</name>
</gene>